<comment type="function">
    <text evidence="1">Activates the atg1 kinase in a nutritional condition dependent manner through the TOR pathway, leading to autophagy. Also involved in cytoplasm to vacuole transport (Cvt) and more specifically in Cvt vesicle formation. Seems to play a role in the switching machinery regulating the conversion between the Cvt pathway and autophagy. Finally, atg13 is also required for glycogen storage during stationary phase (By similarity).</text>
</comment>
<comment type="subunit">
    <text evidence="1">Interacts with atg1 to form the atg1-atg13 kinase complex.</text>
</comment>
<comment type="subcellular location">
    <subcellularLocation>
        <location evidence="2">Cytoplasm</location>
    </subcellularLocation>
    <subcellularLocation>
        <location evidence="2">Preautophagosomal structure</location>
    </subcellularLocation>
</comment>
<comment type="similarity">
    <text evidence="4">Belongs to the ATG13 family. Fungi subfamily.</text>
</comment>
<accession>Q5BBK4</accession>
<accession>C8VLQ3</accession>
<dbReference type="EMBL" id="AACD01000032">
    <property type="protein sequence ID" value="EAA64908.1"/>
    <property type="molecule type" value="Genomic_DNA"/>
</dbReference>
<dbReference type="EMBL" id="BN001307">
    <property type="protein sequence ID" value="CBF86130.1"/>
    <property type="molecule type" value="Genomic_DNA"/>
</dbReference>
<dbReference type="RefSeq" id="XP_659680.1">
    <property type="nucleotide sequence ID" value="XM_654588.1"/>
</dbReference>
<dbReference type="SMR" id="Q5BBK4"/>
<dbReference type="FunCoup" id="Q5BBK4">
    <property type="interactions" value="29"/>
</dbReference>
<dbReference type="STRING" id="227321.Q5BBK4"/>
<dbReference type="EnsemblFungi" id="CBF86130">
    <property type="protein sequence ID" value="CBF86130"/>
    <property type="gene ID" value="ANIA_02076"/>
</dbReference>
<dbReference type="KEGG" id="ani:ANIA_02076"/>
<dbReference type="VEuPathDB" id="FungiDB:AN2076"/>
<dbReference type="eggNOG" id="KOG4573">
    <property type="taxonomic scope" value="Eukaryota"/>
</dbReference>
<dbReference type="HOGENOM" id="CLU_007151_0_0_1"/>
<dbReference type="InParanoid" id="Q5BBK4"/>
<dbReference type="OMA" id="FHQVGPT"/>
<dbReference type="OrthoDB" id="70161at2759"/>
<dbReference type="Proteomes" id="UP000000560">
    <property type="component" value="Chromosome VII"/>
</dbReference>
<dbReference type="GO" id="GO:1990316">
    <property type="term" value="C:Atg1/ULK1 kinase complex"/>
    <property type="evidence" value="ECO:0000318"/>
    <property type="project" value="GO_Central"/>
</dbReference>
<dbReference type="GO" id="GO:0005776">
    <property type="term" value="C:autophagosome"/>
    <property type="evidence" value="ECO:0000318"/>
    <property type="project" value="GO_Central"/>
</dbReference>
<dbReference type="GO" id="GO:0005829">
    <property type="term" value="C:cytosol"/>
    <property type="evidence" value="ECO:0000318"/>
    <property type="project" value="GO_Central"/>
</dbReference>
<dbReference type="GO" id="GO:0000407">
    <property type="term" value="C:phagophore assembly site"/>
    <property type="evidence" value="ECO:0000318"/>
    <property type="project" value="GO_Central"/>
</dbReference>
<dbReference type="GO" id="GO:0019887">
    <property type="term" value="F:protein kinase regulator activity"/>
    <property type="evidence" value="ECO:0000318"/>
    <property type="project" value="GO_Central"/>
</dbReference>
<dbReference type="GO" id="GO:0000423">
    <property type="term" value="P:mitophagy"/>
    <property type="evidence" value="ECO:0000318"/>
    <property type="project" value="GO_Central"/>
</dbReference>
<dbReference type="GO" id="GO:0034727">
    <property type="term" value="P:piecemeal microautophagy of the nucleus"/>
    <property type="evidence" value="ECO:0000318"/>
    <property type="project" value="GO_Central"/>
</dbReference>
<dbReference type="GO" id="GO:0034497">
    <property type="term" value="P:protein localization to phagophore assembly site"/>
    <property type="evidence" value="ECO:0000318"/>
    <property type="project" value="GO_Central"/>
</dbReference>
<dbReference type="GO" id="GO:0015031">
    <property type="term" value="P:protein transport"/>
    <property type="evidence" value="ECO:0007669"/>
    <property type="project" value="UniProtKB-KW"/>
</dbReference>
<dbReference type="FunFam" id="3.30.900.10:FF:000010">
    <property type="entry name" value="Autophagy-related protein 13"/>
    <property type="match status" value="1"/>
</dbReference>
<dbReference type="Gene3D" id="6.10.140.1900">
    <property type="match status" value="1"/>
</dbReference>
<dbReference type="Gene3D" id="3.30.900.10">
    <property type="entry name" value="HORMA domain"/>
    <property type="match status" value="1"/>
</dbReference>
<dbReference type="InterPro" id="IPR040182">
    <property type="entry name" value="ATG13"/>
</dbReference>
<dbReference type="InterPro" id="IPR018731">
    <property type="entry name" value="Atg13_N"/>
</dbReference>
<dbReference type="InterPro" id="IPR036570">
    <property type="entry name" value="HORMA_dom_sf"/>
</dbReference>
<dbReference type="PANTHER" id="PTHR13430">
    <property type="match status" value="1"/>
</dbReference>
<dbReference type="PANTHER" id="PTHR13430:SF4">
    <property type="entry name" value="AUTOPHAGY-RELATED PROTEIN 13"/>
    <property type="match status" value="1"/>
</dbReference>
<dbReference type="Pfam" id="PF10033">
    <property type="entry name" value="ATG13"/>
    <property type="match status" value="1"/>
</dbReference>
<proteinExistence type="inferred from homology"/>
<feature type="chain" id="PRO_0000157969" description="Autophagy-related protein 13">
    <location>
        <begin position="1"/>
        <end position="974"/>
    </location>
</feature>
<feature type="region of interest" description="Disordered" evidence="3">
    <location>
        <begin position="1"/>
        <end position="63"/>
    </location>
</feature>
<feature type="region of interest" description="Disordered" evidence="3">
    <location>
        <begin position="389"/>
        <end position="561"/>
    </location>
</feature>
<feature type="region of interest" description="Disordered" evidence="3">
    <location>
        <begin position="642"/>
        <end position="749"/>
    </location>
</feature>
<feature type="region of interest" description="Disordered" evidence="3">
    <location>
        <begin position="790"/>
        <end position="871"/>
    </location>
</feature>
<feature type="region of interest" description="Disordered" evidence="3">
    <location>
        <begin position="883"/>
        <end position="974"/>
    </location>
</feature>
<feature type="compositionally biased region" description="Low complexity" evidence="3">
    <location>
        <begin position="1"/>
        <end position="18"/>
    </location>
</feature>
<feature type="compositionally biased region" description="Basic and acidic residues" evidence="3">
    <location>
        <begin position="19"/>
        <end position="28"/>
    </location>
</feature>
<feature type="compositionally biased region" description="Low complexity" evidence="3">
    <location>
        <begin position="403"/>
        <end position="422"/>
    </location>
</feature>
<feature type="compositionally biased region" description="Polar residues" evidence="3">
    <location>
        <begin position="462"/>
        <end position="474"/>
    </location>
</feature>
<feature type="compositionally biased region" description="Low complexity" evidence="3">
    <location>
        <begin position="498"/>
        <end position="508"/>
    </location>
</feature>
<feature type="compositionally biased region" description="Low complexity" evidence="3">
    <location>
        <begin position="541"/>
        <end position="551"/>
    </location>
</feature>
<feature type="compositionally biased region" description="Polar residues" evidence="3">
    <location>
        <begin position="681"/>
        <end position="694"/>
    </location>
</feature>
<feature type="compositionally biased region" description="Polar residues" evidence="3">
    <location>
        <begin position="826"/>
        <end position="835"/>
    </location>
</feature>
<feature type="compositionally biased region" description="Basic residues" evidence="3">
    <location>
        <begin position="838"/>
        <end position="850"/>
    </location>
</feature>
<feature type="compositionally biased region" description="Low complexity" evidence="3">
    <location>
        <begin position="856"/>
        <end position="871"/>
    </location>
</feature>
<feature type="compositionally biased region" description="Low complexity" evidence="3">
    <location>
        <begin position="950"/>
        <end position="974"/>
    </location>
</feature>
<protein>
    <recommendedName>
        <fullName>Autophagy-related protein 13</fullName>
    </recommendedName>
</protein>
<gene>
    <name type="primary">atg13</name>
    <name type="ORF">AN2076</name>
</gene>
<keyword id="KW-0072">Autophagy</keyword>
<keyword id="KW-0963">Cytoplasm</keyword>
<keyword id="KW-0653">Protein transport</keyword>
<keyword id="KW-1185">Reference proteome</keyword>
<keyword id="KW-0813">Transport</keyword>
<name>ATG13_EMENI</name>
<reference key="1">
    <citation type="journal article" date="2005" name="Nature">
        <title>Sequencing of Aspergillus nidulans and comparative analysis with A. fumigatus and A. oryzae.</title>
        <authorList>
            <person name="Galagan J.E."/>
            <person name="Calvo S.E."/>
            <person name="Cuomo C."/>
            <person name="Ma L.-J."/>
            <person name="Wortman J.R."/>
            <person name="Batzoglou S."/>
            <person name="Lee S.-I."/>
            <person name="Bastuerkmen M."/>
            <person name="Spevak C.C."/>
            <person name="Clutterbuck J."/>
            <person name="Kapitonov V."/>
            <person name="Jurka J."/>
            <person name="Scazzocchio C."/>
            <person name="Farman M.L."/>
            <person name="Butler J."/>
            <person name="Purcell S."/>
            <person name="Harris S."/>
            <person name="Braus G.H."/>
            <person name="Draht O."/>
            <person name="Busch S."/>
            <person name="D'Enfert C."/>
            <person name="Bouchier C."/>
            <person name="Goldman G.H."/>
            <person name="Bell-Pedersen D."/>
            <person name="Griffiths-Jones S."/>
            <person name="Doonan J.H."/>
            <person name="Yu J."/>
            <person name="Vienken K."/>
            <person name="Pain A."/>
            <person name="Freitag M."/>
            <person name="Selker E.U."/>
            <person name="Archer D.B."/>
            <person name="Penalva M.A."/>
            <person name="Oakley B.R."/>
            <person name="Momany M."/>
            <person name="Tanaka T."/>
            <person name="Kumagai T."/>
            <person name="Asai K."/>
            <person name="Machida M."/>
            <person name="Nierman W.C."/>
            <person name="Denning D.W."/>
            <person name="Caddick M.X."/>
            <person name="Hynes M."/>
            <person name="Paoletti M."/>
            <person name="Fischer R."/>
            <person name="Miller B.L."/>
            <person name="Dyer P.S."/>
            <person name="Sachs M.S."/>
            <person name="Osmani S.A."/>
            <person name="Birren B.W."/>
        </authorList>
    </citation>
    <scope>NUCLEOTIDE SEQUENCE [LARGE SCALE GENOMIC DNA]</scope>
    <source>
        <strain>FGSC A4 / ATCC 38163 / CBS 112.46 / NRRL 194 / M139</strain>
    </source>
</reference>
<reference key="2">
    <citation type="journal article" date="2009" name="Fungal Genet. Biol.">
        <title>The 2008 update of the Aspergillus nidulans genome annotation: a community effort.</title>
        <authorList>
            <person name="Wortman J.R."/>
            <person name="Gilsenan J.M."/>
            <person name="Joardar V."/>
            <person name="Deegan J."/>
            <person name="Clutterbuck J."/>
            <person name="Andersen M.R."/>
            <person name="Archer D."/>
            <person name="Bencina M."/>
            <person name="Braus G."/>
            <person name="Coutinho P."/>
            <person name="von Dohren H."/>
            <person name="Doonan J."/>
            <person name="Driessen A.J."/>
            <person name="Durek P."/>
            <person name="Espeso E."/>
            <person name="Fekete E."/>
            <person name="Flipphi M."/>
            <person name="Estrada C.G."/>
            <person name="Geysens S."/>
            <person name="Goldman G."/>
            <person name="de Groot P.W."/>
            <person name="Hansen K."/>
            <person name="Harris S.D."/>
            <person name="Heinekamp T."/>
            <person name="Helmstaedt K."/>
            <person name="Henrissat B."/>
            <person name="Hofmann G."/>
            <person name="Homan T."/>
            <person name="Horio T."/>
            <person name="Horiuchi H."/>
            <person name="James S."/>
            <person name="Jones M."/>
            <person name="Karaffa L."/>
            <person name="Karanyi Z."/>
            <person name="Kato M."/>
            <person name="Keller N."/>
            <person name="Kelly D.E."/>
            <person name="Kiel J.A."/>
            <person name="Kim J.M."/>
            <person name="van der Klei I.J."/>
            <person name="Klis F.M."/>
            <person name="Kovalchuk A."/>
            <person name="Krasevec N."/>
            <person name="Kubicek C.P."/>
            <person name="Liu B."/>
            <person name="Maccabe A."/>
            <person name="Meyer V."/>
            <person name="Mirabito P."/>
            <person name="Miskei M."/>
            <person name="Mos M."/>
            <person name="Mullins J."/>
            <person name="Nelson D.R."/>
            <person name="Nielsen J."/>
            <person name="Oakley B.R."/>
            <person name="Osmani S.A."/>
            <person name="Pakula T."/>
            <person name="Paszewski A."/>
            <person name="Paulsen I."/>
            <person name="Pilsyk S."/>
            <person name="Pocsi I."/>
            <person name="Punt P.J."/>
            <person name="Ram A.F."/>
            <person name="Ren Q."/>
            <person name="Robellet X."/>
            <person name="Robson G."/>
            <person name="Seiboth B."/>
            <person name="van Solingen P."/>
            <person name="Specht T."/>
            <person name="Sun J."/>
            <person name="Taheri-Talesh N."/>
            <person name="Takeshita N."/>
            <person name="Ussery D."/>
            <person name="vanKuyk P.A."/>
            <person name="Visser H."/>
            <person name="van de Vondervoort P.J."/>
            <person name="de Vries R.P."/>
            <person name="Walton J."/>
            <person name="Xiang X."/>
            <person name="Xiong Y."/>
            <person name="Zeng A.P."/>
            <person name="Brandt B.W."/>
            <person name="Cornell M.J."/>
            <person name="van den Hondel C.A."/>
            <person name="Visser J."/>
            <person name="Oliver S.G."/>
            <person name="Turner G."/>
        </authorList>
    </citation>
    <scope>GENOME REANNOTATION</scope>
    <source>
        <strain>FGSC A4 / ATCC 38163 / CBS 112.46 / NRRL 194 / M139</strain>
    </source>
</reference>
<evidence type="ECO:0000250" key="1"/>
<evidence type="ECO:0000250" key="2">
    <source>
        <dbReference type="UniProtKB" id="Q06628"/>
    </source>
</evidence>
<evidence type="ECO:0000256" key="3">
    <source>
        <dbReference type="SAM" id="MobiDB-lite"/>
    </source>
</evidence>
<evidence type="ECO:0000305" key="4"/>
<sequence length="974" mass="103872">MHQQPRSPAPAASTSSARRSQDYDRRSDSPAFDLRTHTNRGLGIETENDTAEPEQSSQPGPEAISKVNQIVTNYHTKAALIILHSRVELPPSYAKNSNVPRVNRWFNVELEETDALKDQLKTWRTCDATDNRPPPMIIETYLDTAGLTNNQTLVALDDNGKRWDVTESLAASQSSRPAKASSSRAVDVILERWRVELGDMPGKLPSDLGAILPTVYKKSIILFRSLFTYSKFLPAWKFIKRNGRSRAHPALRVKYRIFSGHARDLSKQDHLTMPLFEGDTKVVDTYSFGVTDSPAGPFSVQVTYRTCCDFRVDDSEALLSSQFMGADDEIFQPSLPSGGLDARVTPEVGSAPLTRRTVEDPDLSRAYGSLSTFHHVGPTTGASPISALRAAREARASSPSPPTSSHRNSFAAARASPVGRAATLANDTNPNVARRPSISFQPFKAPPLSASPSLVDPPLSASPRTTGAGRTSLSDSRHMPPPSVTTSSRKPPSFGPDNANSSPNSASPRPTPMSRYSSAFSHRRGRPSSGGINKLEDDNSSGRASATSSGAQPGSGLLAEITGTSSDSIHADDENISEFLKMLDLRKDLLSPSSQTAMDNHSRRMTAASAALSRFRGMKDSNAALSDSMSSSLLMNRSSATSSKQLSGVPGIAGTSISTASSPGGKAISPHTPHTPAIPSRLSSNSIVDNTTTRLHGDNGSPVEEDASDETTTERLPSTVTAIPIPTSPATIFPSTFRRSSSAANRRSSHAIDDDEIFTMRSVSLGAEEPSHTTLGALQRQQDYEPIGTNIAPLESGARSSGGDDGNVLRGPTRRGPGAHRDASLSGPTVATSPYSHHPLHQRRISHSRGRGFSGGPHSLSSGSSSIARGGLIHPYPAEREAERDANAGASHSGTEDRRGTGRGSGGGRHNLPQAAQVEEDEPLLFAMSDFGASRRSFEEGRQGNHGPDSSGNTGSSRRGSGKRGTLSGFHLWP</sequence>
<organism>
    <name type="scientific">Emericella nidulans (strain FGSC A4 / ATCC 38163 / CBS 112.46 / NRRL 194 / M139)</name>
    <name type="common">Aspergillus nidulans</name>
    <dbReference type="NCBI Taxonomy" id="227321"/>
    <lineage>
        <taxon>Eukaryota</taxon>
        <taxon>Fungi</taxon>
        <taxon>Dikarya</taxon>
        <taxon>Ascomycota</taxon>
        <taxon>Pezizomycotina</taxon>
        <taxon>Eurotiomycetes</taxon>
        <taxon>Eurotiomycetidae</taxon>
        <taxon>Eurotiales</taxon>
        <taxon>Aspergillaceae</taxon>
        <taxon>Aspergillus</taxon>
        <taxon>Aspergillus subgen. Nidulantes</taxon>
    </lineage>
</organism>